<name>RK16_VIGUN</name>
<evidence type="ECO:0000255" key="1">
    <source>
        <dbReference type="HAMAP-Rule" id="MF_01342"/>
    </source>
</evidence>
<evidence type="ECO:0000305" key="2"/>
<sequence>TINYNPQRTRFRKQHRGRMKGISYRGNNICFGRYALQALEPAWITSRQIEAGRRAMSRNVRRGGQIWVRIFPDKPVTVRPTETRMGSGKGFPEYWVAVVKPGKILYEMGGVPENIARKAISIASSKMPIRTQFIISG</sequence>
<keyword id="KW-0150">Chloroplast</keyword>
<keyword id="KW-0934">Plastid</keyword>
<keyword id="KW-0687">Ribonucleoprotein</keyword>
<keyword id="KW-0689">Ribosomal protein</keyword>
<proteinExistence type="inferred from homology"/>
<reference key="1">
    <citation type="submission" date="1991-12" db="EMBL/GenBank/DDBJ databases">
        <authorList>
            <person name="Arief L."/>
            <person name="Entsch B."/>
            <person name="Wicks R.E."/>
        </authorList>
    </citation>
    <scope>NUCLEOTIDE SEQUENCE [GENOMIC DNA]</scope>
    <source>
        <strain>cv. Banjo</strain>
    </source>
</reference>
<comment type="subunit">
    <text evidence="1">Part of the 50S ribosomal subunit.</text>
</comment>
<comment type="subcellular location">
    <subcellularLocation>
        <location>Plastid</location>
        <location>Chloroplast</location>
    </subcellularLocation>
</comment>
<comment type="similarity">
    <text evidence="1">Belongs to the universal ribosomal protein uL16 family.</text>
</comment>
<accession>P42353</accession>
<gene>
    <name evidence="1" type="primary">rpl16</name>
</gene>
<dbReference type="EMBL" id="M80799">
    <property type="protein sequence ID" value="AAA84718.1"/>
    <property type="molecule type" value="Genomic_DNA"/>
</dbReference>
<dbReference type="PIR" id="T09650">
    <property type="entry name" value="T09650"/>
</dbReference>
<dbReference type="SMR" id="P42353"/>
<dbReference type="GO" id="GO:0009507">
    <property type="term" value="C:chloroplast"/>
    <property type="evidence" value="ECO:0007669"/>
    <property type="project" value="UniProtKB-SubCell"/>
</dbReference>
<dbReference type="GO" id="GO:0005762">
    <property type="term" value="C:mitochondrial large ribosomal subunit"/>
    <property type="evidence" value="ECO:0007669"/>
    <property type="project" value="TreeGrafter"/>
</dbReference>
<dbReference type="GO" id="GO:0019843">
    <property type="term" value="F:rRNA binding"/>
    <property type="evidence" value="ECO:0007669"/>
    <property type="project" value="InterPro"/>
</dbReference>
<dbReference type="GO" id="GO:0003735">
    <property type="term" value="F:structural constituent of ribosome"/>
    <property type="evidence" value="ECO:0007669"/>
    <property type="project" value="InterPro"/>
</dbReference>
<dbReference type="GO" id="GO:0032543">
    <property type="term" value="P:mitochondrial translation"/>
    <property type="evidence" value="ECO:0007669"/>
    <property type="project" value="TreeGrafter"/>
</dbReference>
<dbReference type="CDD" id="cd01433">
    <property type="entry name" value="Ribosomal_L16_L10e"/>
    <property type="match status" value="1"/>
</dbReference>
<dbReference type="FunFam" id="3.90.1170.10:FF:000001">
    <property type="entry name" value="50S ribosomal protein L16"/>
    <property type="match status" value="1"/>
</dbReference>
<dbReference type="Gene3D" id="3.90.1170.10">
    <property type="entry name" value="Ribosomal protein L10e/L16"/>
    <property type="match status" value="1"/>
</dbReference>
<dbReference type="HAMAP" id="MF_01342">
    <property type="entry name" value="Ribosomal_uL16"/>
    <property type="match status" value="1"/>
</dbReference>
<dbReference type="InterPro" id="IPR047873">
    <property type="entry name" value="Ribosomal_uL16"/>
</dbReference>
<dbReference type="InterPro" id="IPR000114">
    <property type="entry name" value="Ribosomal_uL16_bact-type"/>
</dbReference>
<dbReference type="InterPro" id="IPR020798">
    <property type="entry name" value="Ribosomal_uL16_CS"/>
</dbReference>
<dbReference type="InterPro" id="IPR016180">
    <property type="entry name" value="Ribosomal_uL16_dom"/>
</dbReference>
<dbReference type="InterPro" id="IPR036920">
    <property type="entry name" value="Ribosomal_uL16_sf"/>
</dbReference>
<dbReference type="NCBIfam" id="TIGR01164">
    <property type="entry name" value="rplP_bact"/>
    <property type="match status" value="1"/>
</dbReference>
<dbReference type="PANTHER" id="PTHR12220">
    <property type="entry name" value="50S/60S RIBOSOMAL PROTEIN L16"/>
    <property type="match status" value="1"/>
</dbReference>
<dbReference type="PANTHER" id="PTHR12220:SF13">
    <property type="entry name" value="LARGE RIBOSOMAL SUBUNIT PROTEIN UL16M"/>
    <property type="match status" value="1"/>
</dbReference>
<dbReference type="Pfam" id="PF00252">
    <property type="entry name" value="Ribosomal_L16"/>
    <property type="match status" value="1"/>
</dbReference>
<dbReference type="PRINTS" id="PR00060">
    <property type="entry name" value="RIBOSOMALL16"/>
</dbReference>
<dbReference type="SUPFAM" id="SSF54686">
    <property type="entry name" value="Ribosomal protein L16p/L10e"/>
    <property type="match status" value="1"/>
</dbReference>
<dbReference type="PROSITE" id="PS00586">
    <property type="entry name" value="RIBOSOMAL_L16_1"/>
    <property type="match status" value="1"/>
</dbReference>
<dbReference type="PROSITE" id="PS00701">
    <property type="entry name" value="RIBOSOMAL_L16_2"/>
    <property type="match status" value="1"/>
</dbReference>
<organism>
    <name type="scientific">Vigna unguiculata</name>
    <name type="common">Cowpea</name>
    <dbReference type="NCBI Taxonomy" id="3917"/>
    <lineage>
        <taxon>Eukaryota</taxon>
        <taxon>Viridiplantae</taxon>
        <taxon>Streptophyta</taxon>
        <taxon>Embryophyta</taxon>
        <taxon>Tracheophyta</taxon>
        <taxon>Spermatophyta</taxon>
        <taxon>Magnoliopsida</taxon>
        <taxon>eudicotyledons</taxon>
        <taxon>Gunneridae</taxon>
        <taxon>Pentapetalae</taxon>
        <taxon>rosids</taxon>
        <taxon>fabids</taxon>
        <taxon>Fabales</taxon>
        <taxon>Fabaceae</taxon>
        <taxon>Papilionoideae</taxon>
        <taxon>50 kb inversion clade</taxon>
        <taxon>NPAAA clade</taxon>
        <taxon>indigoferoid/millettioid clade</taxon>
        <taxon>Phaseoleae</taxon>
        <taxon>Vigna</taxon>
    </lineage>
</organism>
<protein>
    <recommendedName>
        <fullName evidence="1">Large ribosomal subunit protein uL16c</fullName>
    </recommendedName>
    <alternativeName>
        <fullName evidence="2">50S ribosomal protein L16, chloroplastic</fullName>
    </alternativeName>
</protein>
<feature type="chain" id="PRO_0000062318" description="Large ribosomal subunit protein uL16c">
    <location>
        <begin position="1" status="less than"/>
        <end position="137"/>
    </location>
</feature>
<feature type="non-terminal residue">
    <location>
        <position position="1"/>
    </location>
</feature>
<geneLocation type="chloroplast"/>